<feature type="chain" id="PRO_0000355556" description="Protein phosphatase 1 regulatory subunit 12A">
    <location>
        <begin position="1"/>
        <end position="1004"/>
    </location>
</feature>
<feature type="repeat" description="ANK 1">
    <location>
        <begin position="39"/>
        <end position="68"/>
    </location>
</feature>
<feature type="repeat" description="ANK 2">
    <location>
        <begin position="72"/>
        <end position="101"/>
    </location>
</feature>
<feature type="repeat" description="ANK 3">
    <location>
        <begin position="105"/>
        <end position="134"/>
    </location>
</feature>
<feature type="repeat" description="ANK 4">
    <location>
        <begin position="138"/>
        <end position="164"/>
    </location>
</feature>
<feature type="repeat" description="ANK 5">
    <location>
        <begin position="198"/>
        <end position="227"/>
    </location>
</feature>
<feature type="repeat" description="ANK 6">
    <location>
        <begin position="231"/>
        <end position="260"/>
    </location>
</feature>
<feature type="region of interest" description="Important for interaction with PPP1CB">
    <location>
        <begin position="35"/>
        <end position="38"/>
    </location>
</feature>
<feature type="region of interest" description="Disordered" evidence="3">
    <location>
        <begin position="291"/>
        <end position="920"/>
    </location>
</feature>
<feature type="compositionally biased region" description="Basic and acidic residues" evidence="3">
    <location>
        <begin position="291"/>
        <end position="300"/>
    </location>
</feature>
<feature type="compositionally biased region" description="Polar residues" evidence="3">
    <location>
        <begin position="302"/>
        <end position="316"/>
    </location>
</feature>
<feature type="compositionally biased region" description="Basic and acidic residues" evidence="3">
    <location>
        <begin position="318"/>
        <end position="329"/>
    </location>
</feature>
<feature type="compositionally biased region" description="Basic and acidic residues" evidence="3">
    <location>
        <begin position="336"/>
        <end position="353"/>
    </location>
</feature>
<feature type="compositionally biased region" description="Acidic residues" evidence="3">
    <location>
        <begin position="357"/>
        <end position="369"/>
    </location>
</feature>
<feature type="compositionally biased region" description="Polar residues" evidence="3">
    <location>
        <begin position="378"/>
        <end position="392"/>
    </location>
</feature>
<feature type="compositionally biased region" description="Basic and acidic residues" evidence="3">
    <location>
        <begin position="417"/>
        <end position="427"/>
    </location>
</feature>
<feature type="compositionally biased region" description="Low complexity" evidence="3">
    <location>
        <begin position="464"/>
        <end position="475"/>
    </location>
</feature>
<feature type="compositionally biased region" description="Basic and acidic residues" evidence="3">
    <location>
        <begin position="476"/>
        <end position="486"/>
    </location>
</feature>
<feature type="compositionally biased region" description="Low complexity" evidence="3">
    <location>
        <begin position="514"/>
        <end position="525"/>
    </location>
</feature>
<feature type="compositionally biased region" description="Basic and acidic residues" evidence="3">
    <location>
        <begin position="528"/>
        <end position="538"/>
    </location>
</feature>
<feature type="compositionally biased region" description="Polar residues" evidence="3">
    <location>
        <begin position="539"/>
        <end position="554"/>
    </location>
</feature>
<feature type="compositionally biased region" description="Low complexity" evidence="3">
    <location>
        <begin position="564"/>
        <end position="578"/>
    </location>
</feature>
<feature type="compositionally biased region" description="Low complexity" evidence="3">
    <location>
        <begin position="587"/>
        <end position="602"/>
    </location>
</feature>
<feature type="compositionally biased region" description="Basic and acidic residues" evidence="3">
    <location>
        <begin position="613"/>
        <end position="624"/>
    </location>
</feature>
<feature type="compositionally biased region" description="Low complexity" evidence="3">
    <location>
        <begin position="625"/>
        <end position="659"/>
    </location>
</feature>
<feature type="compositionally biased region" description="Basic and acidic residues" evidence="3">
    <location>
        <begin position="672"/>
        <end position="681"/>
    </location>
</feature>
<feature type="compositionally biased region" description="Basic residues" evidence="3">
    <location>
        <begin position="682"/>
        <end position="692"/>
    </location>
</feature>
<feature type="compositionally biased region" description="Basic and acidic residues" evidence="3">
    <location>
        <begin position="717"/>
        <end position="765"/>
    </location>
</feature>
<feature type="compositionally biased region" description="Low complexity" evidence="3">
    <location>
        <begin position="770"/>
        <end position="793"/>
    </location>
</feature>
<feature type="compositionally biased region" description="Polar residues" evidence="3">
    <location>
        <begin position="794"/>
        <end position="808"/>
    </location>
</feature>
<feature type="compositionally biased region" description="Basic and acidic residues" evidence="3">
    <location>
        <begin position="812"/>
        <end position="837"/>
    </location>
</feature>
<feature type="compositionally biased region" description="Basic residues" evidence="3">
    <location>
        <begin position="838"/>
        <end position="849"/>
    </location>
</feature>
<feature type="compositionally biased region" description="Basic and acidic residues" evidence="3">
    <location>
        <begin position="864"/>
        <end position="880"/>
    </location>
</feature>
<feature type="compositionally biased region" description="Polar residues" evidence="3">
    <location>
        <begin position="881"/>
        <end position="896"/>
    </location>
</feature>
<feature type="modified residue" description="Phosphothreonine; by ROCK2" evidence="4 6">
    <location>
        <position position="695"/>
    </location>
</feature>
<feature type="modified residue" description="Phosphothreonine; by ROCK2" evidence="4 6">
    <location>
        <position position="850"/>
    </location>
</feature>
<feature type="splice variant" id="VSP_035912" description="In isoform 2." evidence="9">
    <location>
        <begin position="512"/>
        <end position="552"/>
    </location>
</feature>
<feature type="mutagenesis site" description="Reduces phosphorylation. Reduces phosphorylation on serine and threonine residues by 80%; when associated with A-850." evidence="4">
    <original>T</original>
    <variation>A</variation>
    <location>
        <position position="695"/>
    </location>
</feature>
<feature type="mutagenesis site" description="Reduces phosphorylation. Reduces phosphorylation on serine and threonine residues by 80%; when associated with A-695." evidence="4">
    <original>T</original>
    <variation>A</variation>
    <location>
        <position position="850"/>
    </location>
</feature>
<feature type="helix" evidence="10">
    <location>
        <begin position="4"/>
        <end position="19"/>
    </location>
</feature>
<feature type="turn" evidence="10">
    <location>
        <begin position="20"/>
        <end position="22"/>
    </location>
</feature>
<feature type="helix" evidence="10">
    <location>
        <begin position="40"/>
        <end position="50"/>
    </location>
</feature>
<feature type="helix" evidence="10">
    <location>
        <begin position="53"/>
        <end position="62"/>
    </location>
</feature>
<feature type="helix" evidence="10">
    <location>
        <begin position="76"/>
        <end position="82"/>
    </location>
</feature>
<feature type="helix" evidence="10">
    <location>
        <begin position="86"/>
        <end position="94"/>
    </location>
</feature>
<feature type="helix" evidence="10">
    <location>
        <begin position="109"/>
        <end position="116"/>
    </location>
</feature>
<feature type="helix" evidence="10">
    <location>
        <begin position="119"/>
        <end position="127"/>
    </location>
</feature>
<feature type="helix" evidence="10">
    <location>
        <begin position="142"/>
        <end position="145"/>
    </location>
</feature>
<feature type="helix" evidence="10">
    <location>
        <begin position="149"/>
        <end position="162"/>
    </location>
</feature>
<feature type="helix" evidence="10">
    <location>
        <begin position="166"/>
        <end position="187"/>
    </location>
</feature>
<feature type="turn" evidence="10">
    <location>
        <begin position="196"/>
        <end position="198"/>
    </location>
</feature>
<feature type="helix" evidence="10">
    <location>
        <begin position="202"/>
        <end position="209"/>
    </location>
</feature>
<feature type="helix" evidence="10">
    <location>
        <begin position="212"/>
        <end position="219"/>
    </location>
</feature>
<feature type="turn" evidence="10">
    <location>
        <begin position="220"/>
        <end position="222"/>
    </location>
</feature>
<feature type="helix" evidence="10">
    <location>
        <begin position="235"/>
        <end position="241"/>
    </location>
</feature>
<feature type="helix" evidence="10">
    <location>
        <begin position="245"/>
        <end position="253"/>
    </location>
</feature>
<feature type="turn" evidence="10">
    <location>
        <begin position="268"/>
        <end position="270"/>
    </location>
</feature>
<feature type="helix" evidence="10">
    <location>
        <begin position="275"/>
        <end position="277"/>
    </location>
</feature>
<feature type="helix" evidence="10">
    <location>
        <begin position="278"/>
        <end position="286"/>
    </location>
</feature>
<proteinExistence type="evidence at protein level"/>
<keyword id="KW-0002">3D-structure</keyword>
<keyword id="KW-0025">Alternative splicing</keyword>
<keyword id="KW-0040">ANK repeat</keyword>
<keyword id="KW-0963">Cytoplasm</keyword>
<keyword id="KW-0206">Cytoskeleton</keyword>
<keyword id="KW-0903">Direct protein sequencing</keyword>
<keyword id="KW-0597">Phosphoprotein</keyword>
<keyword id="KW-1185">Reference proteome</keyword>
<keyword id="KW-0677">Repeat</keyword>
<protein>
    <recommendedName>
        <fullName>Protein phosphatase 1 regulatory subunit 12A</fullName>
    </recommendedName>
    <alternativeName>
        <fullName>130 kDa myosin-binding subunit of smooth muscle myosin phosphatase</fullName>
    </alternativeName>
    <alternativeName>
        <fullName>Myosin phosphatase-targeting subunit 1</fullName>
        <shortName>Myosin phosphatase target subunit 1</shortName>
    </alternativeName>
    <alternativeName>
        <fullName>PP1M subunit M110</fullName>
    </alternativeName>
    <alternativeName>
        <fullName>Protein phosphatase myosin-binding subunit</fullName>
    </alternativeName>
</protein>
<accession>Q90623</accession>
<accession>Q10727</accession>
<accession>Q90624</accession>
<dbReference type="EMBL" id="D37985">
    <property type="protein sequence ID" value="BAA07201.1"/>
    <property type="molecule type" value="mRNA"/>
</dbReference>
<dbReference type="EMBL" id="D37986">
    <property type="protein sequence ID" value="BAA07202.1"/>
    <property type="molecule type" value="mRNA"/>
</dbReference>
<dbReference type="EMBL" id="S74623">
    <property type="protein sequence ID" value="AAB32730.1"/>
    <property type="molecule type" value="mRNA"/>
</dbReference>
<dbReference type="PIR" id="A55142">
    <property type="entry name" value="A55142"/>
</dbReference>
<dbReference type="RefSeq" id="NP_990454.1">
    <molecule id="Q90623-1"/>
    <property type="nucleotide sequence ID" value="NM_205123.2"/>
</dbReference>
<dbReference type="RefSeq" id="XP_015133641.1">
    <property type="nucleotide sequence ID" value="XM_015278155.1"/>
</dbReference>
<dbReference type="RefSeq" id="XP_015133841.1">
    <molecule id="Q90623-2"/>
    <property type="nucleotide sequence ID" value="XM_015278355.4"/>
</dbReference>
<dbReference type="RefSeq" id="XP_040513316.1">
    <molecule id="Q90623-1"/>
    <property type="nucleotide sequence ID" value="XM_040657382.2"/>
</dbReference>
<dbReference type="RefSeq" id="XP_046762722.1">
    <molecule id="Q90623-1"/>
    <property type="nucleotide sequence ID" value="XM_046906766.1"/>
</dbReference>
<dbReference type="RefSeq" id="XP_046762726.1">
    <molecule id="Q90623-2"/>
    <property type="nucleotide sequence ID" value="XM_046906770.1"/>
</dbReference>
<dbReference type="PDB" id="1S70">
    <property type="method" value="X-ray"/>
    <property type="resolution" value="2.70 A"/>
    <property type="chains" value="B=1-299"/>
</dbReference>
<dbReference type="PDBsum" id="1S70"/>
<dbReference type="BMRB" id="Q90623"/>
<dbReference type="SMR" id="Q90623"/>
<dbReference type="BioGRID" id="676290">
    <property type="interactions" value="1"/>
</dbReference>
<dbReference type="ELM" id="Q90623"/>
<dbReference type="FunCoup" id="Q90623">
    <property type="interactions" value="2350"/>
</dbReference>
<dbReference type="IntAct" id="Q90623">
    <property type="interactions" value="1"/>
</dbReference>
<dbReference type="STRING" id="9031.ENSGALP00000016789"/>
<dbReference type="GlyGen" id="Q90623">
    <property type="glycosylation" value="1 site, 1 O-linked glycan (1 site)"/>
</dbReference>
<dbReference type="iPTMnet" id="Q90623"/>
<dbReference type="PaxDb" id="9031-ENSGALP00000016789"/>
<dbReference type="Ensembl" id="ENSGALT00010032131.1">
    <molecule id="Q90623-1"/>
    <property type="protein sequence ID" value="ENSGALP00010018921.1"/>
    <property type="gene ID" value="ENSGALG00010013333.1"/>
</dbReference>
<dbReference type="GeneID" id="396020"/>
<dbReference type="KEGG" id="gga:396020"/>
<dbReference type="CTD" id="4659"/>
<dbReference type="VEuPathDB" id="HostDB:geneid_396020"/>
<dbReference type="eggNOG" id="KOG0505">
    <property type="taxonomic scope" value="Eukaryota"/>
</dbReference>
<dbReference type="GeneTree" id="ENSGT00940000156120"/>
<dbReference type="InParanoid" id="Q90623"/>
<dbReference type="OrthoDB" id="19014at2759"/>
<dbReference type="PhylomeDB" id="Q90623"/>
<dbReference type="BRENDA" id="3.1.3.53">
    <property type="organism ID" value="1306"/>
</dbReference>
<dbReference type="Reactome" id="R-GGA-2565942">
    <property type="pathway name" value="Regulation of PLK1 Activity at G2/M Transition"/>
</dbReference>
<dbReference type="Reactome" id="R-GGA-5627123">
    <property type="pathway name" value="RHO GTPases activate PAKs"/>
</dbReference>
<dbReference type="EvolutionaryTrace" id="Q90623"/>
<dbReference type="PRO" id="PR:Q90623"/>
<dbReference type="Proteomes" id="UP000000539">
    <property type="component" value="Chromosome 1"/>
</dbReference>
<dbReference type="Bgee" id="ENSGALG00000010325">
    <property type="expression patterns" value="Expressed in colon and 13 other cell types or tissues"/>
</dbReference>
<dbReference type="GO" id="GO:0031672">
    <property type="term" value="C:A band"/>
    <property type="evidence" value="ECO:0000250"/>
    <property type="project" value="UniProtKB"/>
</dbReference>
<dbReference type="GO" id="GO:0005737">
    <property type="term" value="C:cytoplasm"/>
    <property type="evidence" value="ECO:0000318"/>
    <property type="project" value="GO_Central"/>
</dbReference>
<dbReference type="GO" id="GO:0072357">
    <property type="term" value="C:PTW/PP1 phosphatase complex"/>
    <property type="evidence" value="ECO:0000250"/>
    <property type="project" value="UniProtKB"/>
</dbReference>
<dbReference type="GO" id="GO:0001725">
    <property type="term" value="C:stress fiber"/>
    <property type="evidence" value="ECO:0007669"/>
    <property type="project" value="UniProtKB-SubCell"/>
</dbReference>
<dbReference type="GO" id="GO:0030018">
    <property type="term" value="C:Z disc"/>
    <property type="evidence" value="ECO:0000250"/>
    <property type="project" value="UniProtKB"/>
</dbReference>
<dbReference type="GO" id="GO:0071889">
    <property type="term" value="F:14-3-3 protein binding"/>
    <property type="evidence" value="ECO:0000250"/>
    <property type="project" value="UniProtKB"/>
</dbReference>
<dbReference type="GO" id="GO:0004857">
    <property type="term" value="F:enzyme inhibitor activity"/>
    <property type="evidence" value="ECO:0000318"/>
    <property type="project" value="GO_Central"/>
</dbReference>
<dbReference type="GO" id="GO:0017020">
    <property type="term" value="F:myosin phosphatase regulator activity"/>
    <property type="evidence" value="ECO:0000318"/>
    <property type="project" value="GO_Central"/>
</dbReference>
<dbReference type="GO" id="GO:0019208">
    <property type="term" value="F:phosphatase regulator activity"/>
    <property type="evidence" value="ECO:0000250"/>
    <property type="project" value="UniProtKB"/>
</dbReference>
<dbReference type="GO" id="GO:0019901">
    <property type="term" value="F:protein kinase binding"/>
    <property type="evidence" value="ECO:0007669"/>
    <property type="project" value="InterPro"/>
</dbReference>
<dbReference type="GO" id="GO:0048812">
    <property type="term" value="P:neuron projection morphogenesis"/>
    <property type="evidence" value="ECO:0000318"/>
    <property type="project" value="GO_Central"/>
</dbReference>
<dbReference type="GO" id="GO:0030155">
    <property type="term" value="P:regulation of cell adhesion"/>
    <property type="evidence" value="ECO:0000250"/>
    <property type="project" value="UniProtKB"/>
</dbReference>
<dbReference type="GO" id="GO:0007165">
    <property type="term" value="P:signal transduction"/>
    <property type="evidence" value="ECO:0007669"/>
    <property type="project" value="InterPro"/>
</dbReference>
<dbReference type="CDD" id="cd21944">
    <property type="entry name" value="IPD_MYPT1"/>
    <property type="match status" value="1"/>
</dbReference>
<dbReference type="FunFam" id="1.25.40.20:FF:000004">
    <property type="entry name" value="Phosphatase 1 regulatory subunit 12A"/>
    <property type="match status" value="1"/>
</dbReference>
<dbReference type="FunFam" id="1.25.40.20:FF:000876">
    <property type="entry name" value="Protein phosphatase 1 regulatory subunit 12A"/>
    <property type="match status" value="1"/>
</dbReference>
<dbReference type="Gene3D" id="6.10.140.390">
    <property type="match status" value="1"/>
</dbReference>
<dbReference type="Gene3D" id="6.10.250.1820">
    <property type="match status" value="1"/>
</dbReference>
<dbReference type="Gene3D" id="1.25.40.20">
    <property type="entry name" value="Ankyrin repeat-containing domain"/>
    <property type="match status" value="2"/>
</dbReference>
<dbReference type="InterPro" id="IPR002110">
    <property type="entry name" value="Ankyrin_rpt"/>
</dbReference>
<dbReference type="InterPro" id="IPR036770">
    <property type="entry name" value="Ankyrin_rpt-contain_sf"/>
</dbReference>
<dbReference type="InterPro" id="IPR017401">
    <property type="entry name" value="MYPT1/MYPT2/Mbs85"/>
</dbReference>
<dbReference type="InterPro" id="IPR051226">
    <property type="entry name" value="PP1_Regulatory_Subunit"/>
</dbReference>
<dbReference type="InterPro" id="IPR031775">
    <property type="entry name" value="PRKG1_interact"/>
</dbReference>
<dbReference type="PANTHER" id="PTHR24179">
    <property type="entry name" value="PROTEIN PHOSPHATASE 1 REGULATORY SUBUNIT 12"/>
    <property type="match status" value="1"/>
</dbReference>
<dbReference type="PANTHER" id="PTHR24179:SF20">
    <property type="entry name" value="PROTEIN PHOSPHATASE 1 REGULATORY SUBUNIT 12A"/>
    <property type="match status" value="1"/>
</dbReference>
<dbReference type="Pfam" id="PF12796">
    <property type="entry name" value="Ank_2"/>
    <property type="match status" value="2"/>
</dbReference>
<dbReference type="Pfam" id="PF15898">
    <property type="entry name" value="PRKG1_interact"/>
    <property type="match status" value="1"/>
</dbReference>
<dbReference type="PIRSF" id="PIRSF038141">
    <property type="entry name" value="PP1_12ABC_vert"/>
    <property type="match status" value="1"/>
</dbReference>
<dbReference type="SMART" id="SM00248">
    <property type="entry name" value="ANK"/>
    <property type="match status" value="6"/>
</dbReference>
<dbReference type="SUPFAM" id="SSF48403">
    <property type="entry name" value="Ankyrin repeat"/>
    <property type="match status" value="1"/>
</dbReference>
<dbReference type="PROSITE" id="PS50297">
    <property type="entry name" value="ANK_REP_REGION"/>
    <property type="match status" value="1"/>
</dbReference>
<dbReference type="PROSITE" id="PS50088">
    <property type="entry name" value="ANK_REPEAT"/>
    <property type="match status" value="4"/>
</dbReference>
<evidence type="ECO:0000250" key="1"/>
<evidence type="ECO:0000250" key="2">
    <source>
        <dbReference type="UniProtKB" id="O14974"/>
    </source>
</evidence>
<evidence type="ECO:0000256" key="3">
    <source>
        <dbReference type="SAM" id="MobiDB-lite"/>
    </source>
</evidence>
<evidence type="ECO:0000269" key="4">
    <source>
    </source>
</evidence>
<evidence type="ECO:0000269" key="5">
    <source>
    </source>
</evidence>
<evidence type="ECO:0000269" key="6">
    <source>
    </source>
</evidence>
<evidence type="ECO:0000269" key="7">
    <source>
    </source>
</evidence>
<evidence type="ECO:0000269" key="8">
    <source>
    </source>
</evidence>
<evidence type="ECO:0000303" key="9">
    <source>
    </source>
</evidence>
<evidence type="ECO:0007829" key="10">
    <source>
        <dbReference type="PDB" id="1S70"/>
    </source>
</evidence>
<organism>
    <name type="scientific">Gallus gallus</name>
    <name type="common">Chicken</name>
    <dbReference type="NCBI Taxonomy" id="9031"/>
    <lineage>
        <taxon>Eukaryota</taxon>
        <taxon>Metazoa</taxon>
        <taxon>Chordata</taxon>
        <taxon>Craniata</taxon>
        <taxon>Vertebrata</taxon>
        <taxon>Euteleostomi</taxon>
        <taxon>Archelosauria</taxon>
        <taxon>Archosauria</taxon>
        <taxon>Dinosauria</taxon>
        <taxon>Saurischia</taxon>
        <taxon>Theropoda</taxon>
        <taxon>Coelurosauria</taxon>
        <taxon>Aves</taxon>
        <taxon>Neognathae</taxon>
        <taxon>Galloanserae</taxon>
        <taxon>Galliformes</taxon>
        <taxon>Phasianidae</taxon>
        <taxon>Phasianinae</taxon>
        <taxon>Gallus</taxon>
    </lineage>
</organism>
<gene>
    <name type="primary">PPP1R12A</name>
    <name type="synonym">MBS</name>
    <name type="synonym">MYPT1</name>
</gene>
<sequence>MKMADAKQKRNEQLKRWIGSETDLEPPVVKRKKTKVKFDDGAVFLAACSSGDTEEVLRLLERGADINYANVDGLTALHQACIDDNVDMVKFLVENGANINQPDNEGWIPLHAAASCGYLDIAEYLISQGAHVGAVNSEGDTPLDIAEEEAMEELLQNEVNRQGVDIEAARKEEERIMLRDARQWLNSGHINDVRHAKSGGTALHVAAAKGYTEVLKLLIQARYDVNIKDYDGWTPLHAAAHWGKEEACRILVENLCDMEAVNKVGQTAFDVADEDILGYLEELQKKQNLLHSEKREKKSPLIESTANLDNNQTQKTFKNKETLIMEQEKNASSIESLEHEKADEEEEGKKDESSCSSEEEEDDDSESEAETDKAKTLANANTTSTQSASMTAPSVAGGQGTPTSPLKKFPTSTTKVSPKEEERKDESPASWRLGLRKTGSYGALAEITASKEAQKEKDSAGVIRSASSPRLSSSLDNKEKEKDGKGTRLAYVAPTIPRRLASTSDIDEKENRDSSASSIRSGSSYARRKWEEDVKKNSLNEGPTSLNTSYQRSGSFGRRQDDLVSSNVPSTASTVTSSAGLQKTLPASANTTTKSTTGSTSAGVQSSTSNRLWAEDSTEKEKDSVPTAVTVPVAPSVVNAAATTTAMTTATSGTVSSTSEVRERRRSYLTPVRDEESESQRKARSRQARQSRRSTQGVTLTDLQEAEKTIGRSRSTRTREQENEEKEKEEKEKQDKEKQEEKKESETKDDDYRQRYSRTVEEPYHRYRPTSTSTSTSSTSSLSTSTSSLSSSSQLNRPNSLIGITSAYSRSGTKESEREGGKKEEEKEEDKSQPKSIRERRRPREKRRSTGVSFWTQDSDENEQEHQSDSEEGTNKKETQSDSLSRYDTGSLSVSSGDRYDSAQGRSGSQSYLEDRKPYCSRLEKEDSTDFKKLYEQILAENEKLKAQLHDTNMELTDLKLQLEKTTQRQERFADRSLLEMEKRVSGKSQYLLGGKKSSRKKDI</sequence>
<reference key="1">
    <citation type="journal article" date="1994" name="J. Biol. Chem.">
        <title>Characterization of the myosin-binding subunit of smooth muscle myosin phosphatase.</title>
        <authorList>
            <person name="Shimizu H."/>
            <person name="Ito M."/>
            <person name="Miyahara M."/>
            <person name="Ichikawa K."/>
            <person name="Okubo S."/>
            <person name="Konishi T."/>
            <person name="Naka M."/>
            <person name="Tanaka T."/>
            <person name="Hirano K."/>
            <person name="Hartshorne D.J."/>
            <person name="Nakano T."/>
        </authorList>
    </citation>
    <scope>NUCLEOTIDE SEQUENCE [MRNA] (ISOFORMS 1 AND 2)</scope>
    <scope>PARTIAL PROTEIN SEQUENCE</scope>
    <scope>FUNCTION</scope>
    <scope>SUBUNIT</scope>
    <scope>INTERACTION WITH MYOSIN</scope>
    <scope>TISSUE SPECIFICITY</scope>
    <source>
        <tissue>Gizzard</tissue>
    </source>
</reference>
<reference key="2">
    <citation type="journal article" date="1994" name="FEBS Lett.">
        <title>Molecular cloning of cDNA encoding the 110 kDa and 21 kDa regulatory subunits of smooth muscle protein phosphatase 1M.</title>
        <authorList>
            <person name="Chen Y.H."/>
            <person name="Chen M.X."/>
            <person name="Alessi D.R."/>
            <person name="Campbell D.G."/>
            <person name="Shanahan C."/>
            <person name="Cohen P."/>
            <person name="Cohen P.T.W."/>
        </authorList>
    </citation>
    <scope>NUCLEOTIDE SEQUENCE [MRNA] OF 681-1004</scope>
    <scope>PARTIAL PROTEIN SEQUENCE</scope>
    <source>
        <tissue>Gizzard</tissue>
    </source>
</reference>
<reference key="3">
    <citation type="journal article" date="2002" name="FEBS Lett.">
        <title>Phosphorylation of the regulatory subunit of smooth muscle protein phosphatase 1M at Thr850 induces its dissociation from myosin.</title>
        <authorList>
            <person name="Velasco G."/>
            <person name="Armstrong C."/>
            <person name="Morrice N."/>
            <person name="Frame S."/>
            <person name="Cohen P."/>
        </authorList>
    </citation>
    <scope>PARTIAL PROTEIN SEQUENCE</scope>
    <scope>IDENTIFICATION BY MASS SPECTROMETRY</scope>
    <scope>PHOSPHORYLATION AT THR-695 AND THR-850</scope>
</reference>
<reference key="4">
    <citation type="journal article" date="1999" name="J. Biol. Chem.">
        <title>Inhibitory phosphorylation site for Rho-associated kinase on smooth muscle myosin phosphatase.</title>
        <authorList>
            <person name="Feng J."/>
            <person name="Ito M."/>
            <person name="Ichikawa K."/>
            <person name="Isaka N."/>
            <person name="Nishikawa M."/>
            <person name="Hartshorne D.J."/>
            <person name="Nakano T."/>
        </authorList>
    </citation>
    <scope>PHOSPHORYLATION AT THR-695 AND THR-850</scope>
    <scope>MUTAGENESIS OF THR-695 AND THR-850</scope>
</reference>
<reference key="5">
    <citation type="journal article" date="2001" name="FEBS Lett.">
        <title>Myotonic dystrophy protein kinase phosphorylates the myosin phosphatase targeting subunit and inhibits myosin phosphatase activity.</title>
        <authorList>
            <person name="Muranyi A."/>
            <person name="Zhang R."/>
            <person name="Liu F."/>
            <person name="Hirano K."/>
            <person name="Ito M."/>
            <person name="Epstein H.F."/>
            <person name="Hartshorne D.J."/>
        </authorList>
    </citation>
    <scope>PHOSPHORYLATION BY DMPK</scope>
</reference>
<reference key="6">
    <citation type="journal article" date="2004" name="Nature">
        <title>Structural basis of protein phosphatase 1 regulation.</title>
        <authorList>
            <person name="Terrak M."/>
            <person name="Kerff F."/>
            <person name="Langsetmo K."/>
            <person name="Tao T."/>
            <person name="Dominguez R."/>
        </authorList>
    </citation>
    <scope>X-RAY CRYSTALLOGRAPHY (2.7 ANGSTROMS) OF 1-299 IN COMPLEX WITH PPP1CB</scope>
</reference>
<name>MYPT1_CHICK</name>
<comment type="function">
    <text evidence="8">Regulates myosin phosphatase activity.</text>
</comment>
<comment type="subunit">
    <text evidence="1 7 8">PP1 comprises a catalytic subunit, PPP1CA, PPP1CB or PPP1CC, and one or several targeting or regulatory subunits (By similarity). PPP1R12A mediates binding to myosin.</text>
</comment>
<comment type="subcellular location">
    <subcellularLocation>
        <location evidence="2">Cytoplasm</location>
    </subcellularLocation>
    <subcellularLocation>
        <location evidence="2">Cytoplasm</location>
        <location evidence="2">Cytoskeleton</location>
        <location evidence="2">Stress fiber</location>
    </subcellularLocation>
    <text evidence="2">Also along actomyosin filaments.</text>
</comment>
<comment type="alternative products">
    <event type="alternative splicing"/>
    <isoform>
        <id>Q90623-1</id>
        <name>1</name>
        <name>M133</name>
        <sequence type="displayed"/>
    </isoform>
    <isoform>
        <id>Q90623-2</id>
        <name>2</name>
        <name>M130</name>
        <sequence type="described" ref="VSP_035912"/>
    </isoform>
</comment>
<comment type="tissue specificity">
    <text evidence="8">Detected in brain, lung, aorta, heart, gizzard, stomach, oviduct, spleen, kidney and small intestine.</text>
</comment>
<comment type="PTM">
    <text evidence="4 5 6">Phosphorylated by CIT (Rho-associated kinase) and by ROCK2 on serine and threonine residues. Phosphorylation at Thr-695 leads to inhibition of myosin phosphatase activity. Phosphorylation at Thr-850 abolishes myosin binding. May be phosphorylated at Thr-695 by DMPK; may inhibit the myosin phosphatase activity.</text>
</comment>